<organism>
    <name type="scientific">Sulfurisphaera tokodaii (strain DSM 16993 / JCM 10545 / NBRC 100140 / 7)</name>
    <name type="common">Sulfolobus tokodaii</name>
    <dbReference type="NCBI Taxonomy" id="273063"/>
    <lineage>
        <taxon>Archaea</taxon>
        <taxon>Thermoproteota</taxon>
        <taxon>Thermoprotei</taxon>
        <taxon>Sulfolobales</taxon>
        <taxon>Sulfolobaceae</taxon>
        <taxon>Sulfurisphaera</taxon>
    </lineage>
</organism>
<protein>
    <recommendedName>
        <fullName evidence="1">Protein translation factor SUI1 homolog</fullName>
    </recommendedName>
</protein>
<sequence length="100" mass="11185">MSDNLCGGLPPEICEQLNKEEQFIKIKVEKRRYGKEVTIIEGLSGSDVELKKIASELKSKLAAGGTVKNGKIELQGDHRERVKELLMKMGYPESNIIIIE</sequence>
<reference key="1">
    <citation type="journal article" date="2001" name="DNA Res.">
        <title>Complete genome sequence of an aerobic thermoacidophilic Crenarchaeon, Sulfolobus tokodaii strain7.</title>
        <authorList>
            <person name="Kawarabayasi Y."/>
            <person name="Hino Y."/>
            <person name="Horikawa H."/>
            <person name="Jin-no K."/>
            <person name="Takahashi M."/>
            <person name="Sekine M."/>
            <person name="Baba S."/>
            <person name="Ankai A."/>
            <person name="Kosugi H."/>
            <person name="Hosoyama A."/>
            <person name="Fukui S."/>
            <person name="Nagai Y."/>
            <person name="Nishijima K."/>
            <person name="Otsuka R."/>
            <person name="Nakazawa H."/>
            <person name="Takamiya M."/>
            <person name="Kato Y."/>
            <person name="Yoshizawa T."/>
            <person name="Tanaka T."/>
            <person name="Kudoh Y."/>
            <person name="Yamazaki J."/>
            <person name="Kushida N."/>
            <person name="Oguchi A."/>
            <person name="Aoki K."/>
            <person name="Masuda S."/>
            <person name="Yanagii M."/>
            <person name="Nishimura M."/>
            <person name="Yamagishi A."/>
            <person name="Oshima T."/>
            <person name="Kikuchi H."/>
        </authorList>
    </citation>
    <scope>NUCLEOTIDE SEQUENCE [LARGE SCALE GENOMIC DNA]</scope>
    <source>
        <strain>DSM 16993 / JCM 10545 / NBRC 100140 / 7</strain>
    </source>
</reference>
<keyword id="KW-0648">Protein biosynthesis</keyword>
<keyword id="KW-1185">Reference proteome</keyword>
<keyword id="KW-0810">Translation regulation</keyword>
<accession>Q975S0</accession>
<proteinExistence type="inferred from homology"/>
<feature type="chain" id="PRO_0000130593" description="Protein translation factor SUI1 homolog">
    <location>
        <begin position="1"/>
        <end position="100"/>
    </location>
</feature>
<evidence type="ECO:0000255" key="1">
    <source>
        <dbReference type="HAMAP-Rule" id="MF_00604"/>
    </source>
</evidence>
<name>SUI1_SULTO</name>
<comment type="similarity">
    <text evidence="1">Belongs to the SUI1 family.</text>
</comment>
<gene>
    <name type="ordered locus">STK_03500</name>
</gene>
<dbReference type="EMBL" id="BA000023">
    <property type="protein sequence ID" value="BAB65330.1"/>
    <property type="molecule type" value="Genomic_DNA"/>
</dbReference>
<dbReference type="SMR" id="Q975S0"/>
<dbReference type="STRING" id="273063.STK_03500"/>
<dbReference type="KEGG" id="sto:STK_03500"/>
<dbReference type="PATRIC" id="fig|273063.9.peg.409"/>
<dbReference type="eggNOG" id="arCOG04223">
    <property type="taxonomic scope" value="Archaea"/>
</dbReference>
<dbReference type="OrthoDB" id="11182at2157"/>
<dbReference type="Proteomes" id="UP000001015">
    <property type="component" value="Chromosome"/>
</dbReference>
<dbReference type="GO" id="GO:0003729">
    <property type="term" value="F:mRNA binding"/>
    <property type="evidence" value="ECO:0007669"/>
    <property type="project" value="TreeGrafter"/>
</dbReference>
<dbReference type="GO" id="GO:0003743">
    <property type="term" value="F:translation initiation factor activity"/>
    <property type="evidence" value="ECO:0007669"/>
    <property type="project" value="InterPro"/>
</dbReference>
<dbReference type="GO" id="GO:0001731">
    <property type="term" value="P:formation of translation preinitiation complex"/>
    <property type="evidence" value="ECO:0007669"/>
    <property type="project" value="TreeGrafter"/>
</dbReference>
<dbReference type="GO" id="GO:0006417">
    <property type="term" value="P:regulation of translation"/>
    <property type="evidence" value="ECO:0007669"/>
    <property type="project" value="UniProtKB-UniRule"/>
</dbReference>
<dbReference type="GO" id="GO:0002188">
    <property type="term" value="P:translation reinitiation"/>
    <property type="evidence" value="ECO:0007669"/>
    <property type="project" value="TreeGrafter"/>
</dbReference>
<dbReference type="CDD" id="cd11567">
    <property type="entry name" value="YciH_like"/>
    <property type="match status" value="1"/>
</dbReference>
<dbReference type="Gene3D" id="3.30.780.10">
    <property type="entry name" value="SUI1-like domain"/>
    <property type="match status" value="1"/>
</dbReference>
<dbReference type="HAMAP" id="MF_00604">
    <property type="entry name" value="SUI1"/>
    <property type="match status" value="1"/>
</dbReference>
<dbReference type="InterPro" id="IPR050318">
    <property type="entry name" value="DENR/SUI1_TIF"/>
</dbReference>
<dbReference type="InterPro" id="IPR001950">
    <property type="entry name" value="SUI1"/>
</dbReference>
<dbReference type="InterPro" id="IPR022851">
    <property type="entry name" value="SUI1_arc"/>
</dbReference>
<dbReference type="InterPro" id="IPR005872">
    <property type="entry name" value="SUI1_arc_bac"/>
</dbReference>
<dbReference type="InterPro" id="IPR036877">
    <property type="entry name" value="SUI1_dom_sf"/>
</dbReference>
<dbReference type="NCBIfam" id="NF002096">
    <property type="entry name" value="PRK00939.1"/>
    <property type="match status" value="1"/>
</dbReference>
<dbReference type="NCBIfam" id="TIGR01158">
    <property type="entry name" value="SUI1_rel"/>
    <property type="match status" value="1"/>
</dbReference>
<dbReference type="PANTHER" id="PTHR12789:SF0">
    <property type="entry name" value="DENSITY-REGULATED PROTEIN"/>
    <property type="match status" value="1"/>
</dbReference>
<dbReference type="PANTHER" id="PTHR12789">
    <property type="entry name" value="DENSITY-REGULATED PROTEIN HOMOLOG"/>
    <property type="match status" value="1"/>
</dbReference>
<dbReference type="Pfam" id="PF01253">
    <property type="entry name" value="SUI1"/>
    <property type="match status" value="1"/>
</dbReference>
<dbReference type="PIRSF" id="PIRSF037511">
    <property type="entry name" value="Transl_init_SUI1_pro"/>
    <property type="match status" value="1"/>
</dbReference>
<dbReference type="SUPFAM" id="SSF55159">
    <property type="entry name" value="eIF1-like"/>
    <property type="match status" value="1"/>
</dbReference>
<dbReference type="PROSITE" id="PS50296">
    <property type="entry name" value="SUI1"/>
    <property type="match status" value="1"/>
</dbReference>